<accession>A6VTV8</accession>
<organism>
    <name type="scientific">Marinomonas sp. (strain MWYL1)</name>
    <dbReference type="NCBI Taxonomy" id="400668"/>
    <lineage>
        <taxon>Bacteria</taxon>
        <taxon>Pseudomonadati</taxon>
        <taxon>Pseudomonadota</taxon>
        <taxon>Gammaproteobacteria</taxon>
        <taxon>Oceanospirillales</taxon>
        <taxon>Oceanospirillaceae</taxon>
        <taxon>Marinomonas</taxon>
    </lineage>
</organism>
<evidence type="ECO:0000255" key="1">
    <source>
        <dbReference type="HAMAP-Rule" id="MF_01953"/>
    </source>
</evidence>
<comment type="catalytic activity">
    <reaction evidence="1">
        <text>urea + 2 H2O + H(+) = hydrogencarbonate + 2 NH4(+)</text>
        <dbReference type="Rhea" id="RHEA:20557"/>
        <dbReference type="ChEBI" id="CHEBI:15377"/>
        <dbReference type="ChEBI" id="CHEBI:15378"/>
        <dbReference type="ChEBI" id="CHEBI:16199"/>
        <dbReference type="ChEBI" id="CHEBI:17544"/>
        <dbReference type="ChEBI" id="CHEBI:28938"/>
        <dbReference type="EC" id="3.5.1.5"/>
    </reaction>
</comment>
<comment type="cofactor">
    <cofactor evidence="1">
        <name>Ni cation</name>
        <dbReference type="ChEBI" id="CHEBI:25516"/>
    </cofactor>
    <text evidence="1">Binds 2 nickel ions per subunit.</text>
</comment>
<comment type="pathway">
    <text evidence="1">Nitrogen metabolism; urea degradation; CO(2) and NH(3) from urea (urease route): step 1/1.</text>
</comment>
<comment type="subunit">
    <text evidence="1">Heterotrimer of UreA (gamma), UreB (beta) and UreC (alpha) subunits. Three heterotrimers associate to form the active enzyme.</text>
</comment>
<comment type="subcellular location">
    <subcellularLocation>
        <location evidence="1">Cytoplasm</location>
    </subcellularLocation>
</comment>
<comment type="PTM">
    <text evidence="1">Carboxylation allows a single lysine to coordinate two nickel ions.</text>
</comment>
<comment type="similarity">
    <text evidence="1">Belongs to the metallo-dependent hydrolases superfamily. Urease alpha subunit family.</text>
</comment>
<protein>
    <recommendedName>
        <fullName evidence="1">Urease subunit alpha</fullName>
        <ecNumber evidence="1">3.5.1.5</ecNumber>
    </recommendedName>
    <alternativeName>
        <fullName evidence="1">Urea amidohydrolase subunit alpha</fullName>
    </alternativeName>
</protein>
<keyword id="KW-0963">Cytoplasm</keyword>
<keyword id="KW-0378">Hydrolase</keyword>
<keyword id="KW-0479">Metal-binding</keyword>
<keyword id="KW-0533">Nickel</keyword>
<dbReference type="EC" id="3.5.1.5" evidence="1"/>
<dbReference type="EMBL" id="CP000749">
    <property type="protein sequence ID" value="ABR69887.1"/>
    <property type="molecule type" value="Genomic_DNA"/>
</dbReference>
<dbReference type="SMR" id="A6VTV8"/>
<dbReference type="STRING" id="400668.Mmwyl1_0956"/>
<dbReference type="KEGG" id="mmw:Mmwyl1_0956"/>
<dbReference type="eggNOG" id="COG0804">
    <property type="taxonomic scope" value="Bacteria"/>
</dbReference>
<dbReference type="HOGENOM" id="CLU_000980_0_0_6"/>
<dbReference type="OrthoDB" id="9802793at2"/>
<dbReference type="UniPathway" id="UPA00258">
    <property type="reaction ID" value="UER00370"/>
</dbReference>
<dbReference type="GO" id="GO:0005737">
    <property type="term" value="C:cytoplasm"/>
    <property type="evidence" value="ECO:0007669"/>
    <property type="project" value="UniProtKB-SubCell"/>
</dbReference>
<dbReference type="GO" id="GO:0016151">
    <property type="term" value="F:nickel cation binding"/>
    <property type="evidence" value="ECO:0007669"/>
    <property type="project" value="UniProtKB-UniRule"/>
</dbReference>
<dbReference type="GO" id="GO:0009039">
    <property type="term" value="F:urease activity"/>
    <property type="evidence" value="ECO:0007669"/>
    <property type="project" value="UniProtKB-UniRule"/>
</dbReference>
<dbReference type="GO" id="GO:0043419">
    <property type="term" value="P:urea catabolic process"/>
    <property type="evidence" value="ECO:0007669"/>
    <property type="project" value="UniProtKB-UniRule"/>
</dbReference>
<dbReference type="CDD" id="cd00375">
    <property type="entry name" value="Urease_alpha"/>
    <property type="match status" value="1"/>
</dbReference>
<dbReference type="Gene3D" id="3.20.20.140">
    <property type="entry name" value="Metal-dependent hydrolases"/>
    <property type="match status" value="1"/>
</dbReference>
<dbReference type="Gene3D" id="2.30.40.10">
    <property type="entry name" value="Urease, subunit C, domain 1"/>
    <property type="match status" value="1"/>
</dbReference>
<dbReference type="HAMAP" id="MF_01953">
    <property type="entry name" value="Urease_alpha"/>
    <property type="match status" value="1"/>
</dbReference>
<dbReference type="InterPro" id="IPR006680">
    <property type="entry name" value="Amidohydro-rel"/>
</dbReference>
<dbReference type="InterPro" id="IPR011059">
    <property type="entry name" value="Metal-dep_hydrolase_composite"/>
</dbReference>
<dbReference type="InterPro" id="IPR032466">
    <property type="entry name" value="Metal_Hydrolase"/>
</dbReference>
<dbReference type="InterPro" id="IPR011612">
    <property type="entry name" value="Urease_alpha_N_dom"/>
</dbReference>
<dbReference type="InterPro" id="IPR050112">
    <property type="entry name" value="Urease_alpha_subunit"/>
</dbReference>
<dbReference type="InterPro" id="IPR017950">
    <property type="entry name" value="Urease_AS"/>
</dbReference>
<dbReference type="InterPro" id="IPR005848">
    <property type="entry name" value="Urease_asu"/>
</dbReference>
<dbReference type="InterPro" id="IPR017951">
    <property type="entry name" value="Urease_asu_c"/>
</dbReference>
<dbReference type="InterPro" id="IPR029754">
    <property type="entry name" value="Urease_Ni-bd"/>
</dbReference>
<dbReference type="NCBIfam" id="NF009685">
    <property type="entry name" value="PRK13206.1"/>
    <property type="match status" value="1"/>
</dbReference>
<dbReference type="NCBIfam" id="NF009686">
    <property type="entry name" value="PRK13207.1"/>
    <property type="match status" value="1"/>
</dbReference>
<dbReference type="NCBIfam" id="TIGR01792">
    <property type="entry name" value="urease_alph"/>
    <property type="match status" value="1"/>
</dbReference>
<dbReference type="PANTHER" id="PTHR43440">
    <property type="entry name" value="UREASE"/>
    <property type="match status" value="1"/>
</dbReference>
<dbReference type="PANTHER" id="PTHR43440:SF1">
    <property type="entry name" value="UREASE"/>
    <property type="match status" value="1"/>
</dbReference>
<dbReference type="Pfam" id="PF01979">
    <property type="entry name" value="Amidohydro_1"/>
    <property type="match status" value="1"/>
</dbReference>
<dbReference type="Pfam" id="PF00449">
    <property type="entry name" value="Urease_alpha"/>
    <property type="match status" value="1"/>
</dbReference>
<dbReference type="PRINTS" id="PR01752">
    <property type="entry name" value="UREASE"/>
</dbReference>
<dbReference type="SUPFAM" id="SSF51338">
    <property type="entry name" value="Composite domain of metallo-dependent hydrolases"/>
    <property type="match status" value="2"/>
</dbReference>
<dbReference type="SUPFAM" id="SSF51556">
    <property type="entry name" value="Metallo-dependent hydrolases"/>
    <property type="match status" value="1"/>
</dbReference>
<dbReference type="PROSITE" id="PS01120">
    <property type="entry name" value="UREASE_1"/>
    <property type="match status" value="1"/>
</dbReference>
<dbReference type="PROSITE" id="PS00145">
    <property type="entry name" value="UREASE_2"/>
    <property type="match status" value="1"/>
</dbReference>
<dbReference type="PROSITE" id="PS51368">
    <property type="entry name" value="UREASE_3"/>
    <property type="match status" value="1"/>
</dbReference>
<sequence>MATMDRQSYAQMFGPTTGDRVRLGDTDIWIQVEKDFTVYGDEVKFGGGKVIRDGMGQSQVTNEIAVDLVITNALVLDHWGIVKGDVGIKDGRIFKVGKAGNPDVQDNVDIVVGPGTEVIAGEGSILTAGGIDAHIHFICPQQVEEALTSGVTTMIGGGTGPATGTKATTCTSGPWYLGKMLQATDSMPMNLGFLGKGNASLPEALEEQLEAGACGLKLHEDWGTTPASIDCCLSVAEAYDVQVAIHTDTLNESGFVDSTIDAFKDRVIHTYHTEGAGGGHAPDIIQACSNPNVLPSSTNPTRPYTHNTVDEHLDMLMVCHHLDSNIEEDVAFADSRIRKETIAAEDILHDRGAFSMISSDSQAMGRVGEVVTRTWQTAHKMKQQFGLLPEDQELGADNFRARRYIAKYTINPAIAHGISHEVGSIEPGKMADLVLWKPAFFAVKPSMIIKGGMIASAPMGDPNASIPTPQPVHYRPMFGSCGKAAAATSVTFVSKAALNNGLKESLGLERTLVACKNTRNISKLDMIHNDWLPNITVDPQTYEVRADGELLTCEPAETLPLAQLYTLF</sequence>
<feature type="chain" id="PRO_1000088492" description="Urease subunit alpha">
    <location>
        <begin position="1"/>
        <end position="568"/>
    </location>
</feature>
<feature type="active site" description="Proton donor" evidence="1">
    <location>
        <position position="320"/>
    </location>
</feature>
<feature type="binding site" evidence="1">
    <location>
        <position position="134"/>
    </location>
    <ligand>
        <name>Ni(2+)</name>
        <dbReference type="ChEBI" id="CHEBI:49786"/>
        <label>1</label>
    </ligand>
</feature>
<feature type="binding site" evidence="1">
    <location>
        <position position="136"/>
    </location>
    <ligand>
        <name>Ni(2+)</name>
        <dbReference type="ChEBI" id="CHEBI:49786"/>
        <label>1</label>
    </ligand>
</feature>
<feature type="binding site" description="via carbamate group" evidence="1">
    <location>
        <position position="217"/>
    </location>
    <ligand>
        <name>Ni(2+)</name>
        <dbReference type="ChEBI" id="CHEBI:49786"/>
        <label>1</label>
    </ligand>
</feature>
<feature type="binding site" description="via carbamate group" evidence="1">
    <location>
        <position position="217"/>
    </location>
    <ligand>
        <name>Ni(2+)</name>
        <dbReference type="ChEBI" id="CHEBI:49786"/>
        <label>2</label>
    </ligand>
</feature>
<feature type="binding site" evidence="1">
    <location>
        <position position="219"/>
    </location>
    <ligand>
        <name>substrate</name>
    </ligand>
</feature>
<feature type="binding site" evidence="1">
    <location>
        <position position="246"/>
    </location>
    <ligand>
        <name>Ni(2+)</name>
        <dbReference type="ChEBI" id="CHEBI:49786"/>
        <label>2</label>
    </ligand>
</feature>
<feature type="binding site" evidence="1">
    <location>
        <position position="272"/>
    </location>
    <ligand>
        <name>Ni(2+)</name>
        <dbReference type="ChEBI" id="CHEBI:49786"/>
        <label>2</label>
    </ligand>
</feature>
<feature type="binding site" evidence="1">
    <location>
        <position position="360"/>
    </location>
    <ligand>
        <name>Ni(2+)</name>
        <dbReference type="ChEBI" id="CHEBI:49786"/>
        <label>1</label>
    </ligand>
</feature>
<feature type="modified residue" description="N6-carboxylysine" evidence="1">
    <location>
        <position position="217"/>
    </location>
</feature>
<gene>
    <name evidence="1" type="primary">ureC</name>
    <name type="ordered locus">Mmwyl1_0956</name>
</gene>
<proteinExistence type="inferred from homology"/>
<reference key="1">
    <citation type="submission" date="2007-06" db="EMBL/GenBank/DDBJ databases">
        <title>Complete sequence of Marinomonas sp. MWYL1.</title>
        <authorList>
            <consortium name="US DOE Joint Genome Institute"/>
            <person name="Copeland A."/>
            <person name="Lucas S."/>
            <person name="Lapidus A."/>
            <person name="Barry K."/>
            <person name="Glavina del Rio T."/>
            <person name="Dalin E."/>
            <person name="Tice H."/>
            <person name="Pitluck S."/>
            <person name="Kiss H."/>
            <person name="Brettin T."/>
            <person name="Bruce D."/>
            <person name="Detter J.C."/>
            <person name="Han C."/>
            <person name="Schmutz J."/>
            <person name="Larimer F."/>
            <person name="Land M."/>
            <person name="Hauser L."/>
            <person name="Kyrpides N."/>
            <person name="Kim E."/>
            <person name="Johnston A.W.B."/>
            <person name="Todd J.D."/>
            <person name="Rogers R."/>
            <person name="Wexler M."/>
            <person name="Bond P.L."/>
            <person name="Li Y."/>
            <person name="Richardson P."/>
        </authorList>
    </citation>
    <scope>NUCLEOTIDE SEQUENCE [LARGE SCALE GENOMIC DNA]</scope>
    <source>
        <strain>MWYL1</strain>
    </source>
</reference>
<name>URE1_MARMS</name>